<comment type="function">
    <text>May be involved in transcriptional regulation.</text>
</comment>
<comment type="subcellular location">
    <subcellularLocation>
        <location evidence="4">Nucleus</location>
    </subcellularLocation>
</comment>
<comment type="similarity">
    <text evidence="4">Belongs to the krueppel C2H2-type zinc-finger protein family.</text>
</comment>
<reference key="1">
    <citation type="journal article" date="2004" name="Nat. Genet.">
        <title>Complete sequencing and characterization of 21,243 full-length human cDNAs.</title>
        <authorList>
            <person name="Ota T."/>
            <person name="Suzuki Y."/>
            <person name="Nishikawa T."/>
            <person name="Otsuki T."/>
            <person name="Sugiyama T."/>
            <person name="Irie R."/>
            <person name="Wakamatsu A."/>
            <person name="Hayashi K."/>
            <person name="Sato H."/>
            <person name="Nagai K."/>
            <person name="Kimura K."/>
            <person name="Makita H."/>
            <person name="Sekine M."/>
            <person name="Obayashi M."/>
            <person name="Nishi T."/>
            <person name="Shibahara T."/>
            <person name="Tanaka T."/>
            <person name="Ishii S."/>
            <person name="Yamamoto J."/>
            <person name="Saito K."/>
            <person name="Kawai Y."/>
            <person name="Isono Y."/>
            <person name="Nakamura Y."/>
            <person name="Nagahari K."/>
            <person name="Murakami K."/>
            <person name="Yasuda T."/>
            <person name="Iwayanagi T."/>
            <person name="Wagatsuma M."/>
            <person name="Shiratori A."/>
            <person name="Sudo H."/>
            <person name="Hosoiri T."/>
            <person name="Kaku Y."/>
            <person name="Kodaira H."/>
            <person name="Kondo H."/>
            <person name="Sugawara M."/>
            <person name="Takahashi M."/>
            <person name="Kanda K."/>
            <person name="Yokoi T."/>
            <person name="Furuya T."/>
            <person name="Kikkawa E."/>
            <person name="Omura Y."/>
            <person name="Abe K."/>
            <person name="Kamihara K."/>
            <person name="Katsuta N."/>
            <person name="Sato K."/>
            <person name="Tanikawa M."/>
            <person name="Yamazaki M."/>
            <person name="Ninomiya K."/>
            <person name="Ishibashi T."/>
            <person name="Yamashita H."/>
            <person name="Murakawa K."/>
            <person name="Fujimori K."/>
            <person name="Tanai H."/>
            <person name="Kimata M."/>
            <person name="Watanabe M."/>
            <person name="Hiraoka S."/>
            <person name="Chiba Y."/>
            <person name="Ishida S."/>
            <person name="Ono Y."/>
            <person name="Takiguchi S."/>
            <person name="Watanabe S."/>
            <person name="Yosida M."/>
            <person name="Hotuta T."/>
            <person name="Kusano J."/>
            <person name="Kanehori K."/>
            <person name="Takahashi-Fujii A."/>
            <person name="Hara H."/>
            <person name="Tanase T.-O."/>
            <person name="Nomura Y."/>
            <person name="Togiya S."/>
            <person name="Komai F."/>
            <person name="Hara R."/>
            <person name="Takeuchi K."/>
            <person name="Arita M."/>
            <person name="Imose N."/>
            <person name="Musashino K."/>
            <person name="Yuuki H."/>
            <person name="Oshima A."/>
            <person name="Sasaki N."/>
            <person name="Aotsuka S."/>
            <person name="Yoshikawa Y."/>
            <person name="Matsunawa H."/>
            <person name="Ichihara T."/>
            <person name="Shiohata N."/>
            <person name="Sano S."/>
            <person name="Moriya S."/>
            <person name="Momiyama H."/>
            <person name="Satoh N."/>
            <person name="Takami S."/>
            <person name="Terashima Y."/>
            <person name="Suzuki O."/>
            <person name="Nakagawa S."/>
            <person name="Senoh A."/>
            <person name="Mizoguchi H."/>
            <person name="Goto Y."/>
            <person name="Shimizu F."/>
            <person name="Wakebe H."/>
            <person name="Hishigaki H."/>
            <person name="Watanabe T."/>
            <person name="Sugiyama A."/>
            <person name="Takemoto M."/>
            <person name="Kawakami B."/>
            <person name="Yamazaki M."/>
            <person name="Watanabe K."/>
            <person name="Kumagai A."/>
            <person name="Itakura S."/>
            <person name="Fukuzumi Y."/>
            <person name="Fujimori Y."/>
            <person name="Komiyama M."/>
            <person name="Tashiro H."/>
            <person name="Tanigami A."/>
            <person name="Fujiwara T."/>
            <person name="Ono T."/>
            <person name="Yamada K."/>
            <person name="Fujii Y."/>
            <person name="Ozaki K."/>
            <person name="Hirao M."/>
            <person name="Ohmori Y."/>
            <person name="Kawabata A."/>
            <person name="Hikiji T."/>
            <person name="Kobatake N."/>
            <person name="Inagaki H."/>
            <person name="Ikema Y."/>
            <person name="Okamoto S."/>
            <person name="Okitani R."/>
            <person name="Kawakami T."/>
            <person name="Noguchi S."/>
            <person name="Itoh T."/>
            <person name="Shigeta K."/>
            <person name="Senba T."/>
            <person name="Matsumura K."/>
            <person name="Nakajima Y."/>
            <person name="Mizuno T."/>
            <person name="Morinaga M."/>
            <person name="Sasaki M."/>
            <person name="Togashi T."/>
            <person name="Oyama M."/>
            <person name="Hata H."/>
            <person name="Watanabe M."/>
            <person name="Komatsu T."/>
            <person name="Mizushima-Sugano J."/>
            <person name="Satoh T."/>
            <person name="Shirai Y."/>
            <person name="Takahashi Y."/>
            <person name="Nakagawa K."/>
            <person name="Okumura K."/>
            <person name="Nagase T."/>
            <person name="Nomura N."/>
            <person name="Kikuchi H."/>
            <person name="Masuho Y."/>
            <person name="Yamashita R."/>
            <person name="Nakai K."/>
            <person name="Yada T."/>
            <person name="Nakamura Y."/>
            <person name="Ohara O."/>
            <person name="Isogai T."/>
            <person name="Sugano S."/>
        </authorList>
    </citation>
    <scope>NUCLEOTIDE SEQUENCE [LARGE SCALE MRNA]</scope>
    <source>
        <tissue>Small intestine</tissue>
    </source>
</reference>
<reference key="2">
    <citation type="journal article" date="2004" name="Nature">
        <title>The DNA sequence and biology of human chromosome 19.</title>
        <authorList>
            <person name="Grimwood J."/>
            <person name="Gordon L.A."/>
            <person name="Olsen A.S."/>
            <person name="Terry A."/>
            <person name="Schmutz J."/>
            <person name="Lamerdin J.E."/>
            <person name="Hellsten U."/>
            <person name="Goodstein D."/>
            <person name="Couronne O."/>
            <person name="Tran-Gyamfi M."/>
            <person name="Aerts A."/>
            <person name="Altherr M."/>
            <person name="Ashworth L."/>
            <person name="Bajorek E."/>
            <person name="Black S."/>
            <person name="Branscomb E."/>
            <person name="Caenepeel S."/>
            <person name="Carrano A.V."/>
            <person name="Caoile C."/>
            <person name="Chan Y.M."/>
            <person name="Christensen M."/>
            <person name="Cleland C.A."/>
            <person name="Copeland A."/>
            <person name="Dalin E."/>
            <person name="Dehal P."/>
            <person name="Denys M."/>
            <person name="Detter J.C."/>
            <person name="Escobar J."/>
            <person name="Flowers D."/>
            <person name="Fotopulos D."/>
            <person name="Garcia C."/>
            <person name="Georgescu A.M."/>
            <person name="Glavina T."/>
            <person name="Gomez M."/>
            <person name="Gonzales E."/>
            <person name="Groza M."/>
            <person name="Hammon N."/>
            <person name="Hawkins T."/>
            <person name="Haydu L."/>
            <person name="Ho I."/>
            <person name="Huang W."/>
            <person name="Israni S."/>
            <person name="Jett J."/>
            <person name="Kadner K."/>
            <person name="Kimball H."/>
            <person name="Kobayashi A."/>
            <person name="Larionov V."/>
            <person name="Leem S.-H."/>
            <person name="Lopez F."/>
            <person name="Lou Y."/>
            <person name="Lowry S."/>
            <person name="Malfatti S."/>
            <person name="Martinez D."/>
            <person name="McCready P.M."/>
            <person name="Medina C."/>
            <person name="Morgan J."/>
            <person name="Nelson K."/>
            <person name="Nolan M."/>
            <person name="Ovcharenko I."/>
            <person name="Pitluck S."/>
            <person name="Pollard M."/>
            <person name="Popkie A.P."/>
            <person name="Predki P."/>
            <person name="Quan G."/>
            <person name="Ramirez L."/>
            <person name="Rash S."/>
            <person name="Retterer J."/>
            <person name="Rodriguez A."/>
            <person name="Rogers S."/>
            <person name="Salamov A."/>
            <person name="Salazar A."/>
            <person name="She X."/>
            <person name="Smith D."/>
            <person name="Slezak T."/>
            <person name="Solovyev V."/>
            <person name="Thayer N."/>
            <person name="Tice H."/>
            <person name="Tsai M."/>
            <person name="Ustaszewska A."/>
            <person name="Vo N."/>
            <person name="Wagner M."/>
            <person name="Wheeler J."/>
            <person name="Wu K."/>
            <person name="Xie G."/>
            <person name="Yang J."/>
            <person name="Dubchak I."/>
            <person name="Furey T.S."/>
            <person name="DeJong P."/>
            <person name="Dickson M."/>
            <person name="Gordon D."/>
            <person name="Eichler E.E."/>
            <person name="Pennacchio L.A."/>
            <person name="Richardson P."/>
            <person name="Stubbs L."/>
            <person name="Rokhsar D.S."/>
            <person name="Myers R.M."/>
            <person name="Rubin E.M."/>
            <person name="Lucas S.M."/>
        </authorList>
    </citation>
    <scope>NUCLEOTIDE SEQUENCE [LARGE SCALE GENOMIC DNA]</scope>
</reference>
<reference key="3">
    <citation type="submission" date="2005-07" db="EMBL/GenBank/DDBJ databases">
        <authorList>
            <person name="Mural R.J."/>
            <person name="Istrail S."/>
            <person name="Sutton G.G."/>
            <person name="Florea L."/>
            <person name="Halpern A.L."/>
            <person name="Mobarry C.M."/>
            <person name="Lippert R."/>
            <person name="Walenz B."/>
            <person name="Shatkay H."/>
            <person name="Dew I."/>
            <person name="Miller J.R."/>
            <person name="Flanigan M.J."/>
            <person name="Edwards N.J."/>
            <person name="Bolanos R."/>
            <person name="Fasulo D."/>
            <person name="Halldorsson B.V."/>
            <person name="Hannenhalli S."/>
            <person name="Turner R."/>
            <person name="Yooseph S."/>
            <person name="Lu F."/>
            <person name="Nusskern D.R."/>
            <person name="Shue B.C."/>
            <person name="Zheng X.H."/>
            <person name="Zhong F."/>
            <person name="Delcher A.L."/>
            <person name="Huson D.H."/>
            <person name="Kravitz S.A."/>
            <person name="Mouchard L."/>
            <person name="Reinert K."/>
            <person name="Remington K.A."/>
            <person name="Clark A.G."/>
            <person name="Waterman M.S."/>
            <person name="Eichler E.E."/>
            <person name="Adams M.D."/>
            <person name="Hunkapiller M.W."/>
            <person name="Myers E.W."/>
            <person name="Venter J.C."/>
        </authorList>
    </citation>
    <scope>NUCLEOTIDE SEQUENCE [LARGE SCALE GENOMIC DNA]</scope>
</reference>
<reference key="4">
    <citation type="journal article" date="2004" name="Genome Res.">
        <title>The status, quality, and expansion of the NIH full-length cDNA project: the Mammalian Gene Collection (MGC).</title>
        <authorList>
            <consortium name="The MGC Project Team"/>
        </authorList>
    </citation>
    <scope>NUCLEOTIDE SEQUENCE [LARGE SCALE MRNA]</scope>
    <scope>VARIANTS ASN-80 AND LEU-162</scope>
</reference>
<reference key="5">
    <citation type="journal article" date="2007" name="BMC Genomics">
        <title>The full-ORF clone resource of the German cDNA consortium.</title>
        <authorList>
            <person name="Bechtel S."/>
            <person name="Rosenfelder H."/>
            <person name="Duda A."/>
            <person name="Schmidt C.P."/>
            <person name="Ernst U."/>
            <person name="Wellenreuther R."/>
            <person name="Mehrle A."/>
            <person name="Schuster C."/>
            <person name="Bahr A."/>
            <person name="Bloecker H."/>
            <person name="Heubner D."/>
            <person name="Hoerlein A."/>
            <person name="Michel G."/>
            <person name="Wedler H."/>
            <person name="Koehrer K."/>
            <person name="Ottenwaelder B."/>
            <person name="Poustka A."/>
            <person name="Wiemann S."/>
            <person name="Schupp I."/>
        </authorList>
    </citation>
    <scope>NUCLEOTIDE SEQUENCE [LARGE SCALE MRNA] OF 380-651</scope>
    <source>
        <tissue>Testis</tissue>
    </source>
</reference>
<feature type="chain" id="PRO_0000294362" description="Zinc finger protein 816">
    <location>
        <begin position="1"/>
        <end position="651"/>
    </location>
</feature>
<feature type="domain" description="KRAB" evidence="2">
    <location>
        <begin position="24"/>
        <end position="98"/>
    </location>
</feature>
<feature type="zinc finger region" description="C2H2-type 1" evidence="1">
    <location>
        <begin position="227"/>
        <end position="251"/>
    </location>
</feature>
<feature type="zinc finger region" description="C2H2-type 2" evidence="1">
    <location>
        <begin position="257"/>
        <end position="279"/>
    </location>
</feature>
<feature type="zinc finger region" description="C2H2-type 3" evidence="1">
    <location>
        <begin position="285"/>
        <end position="307"/>
    </location>
</feature>
<feature type="zinc finger region" description="C2H2-type 4" evidence="1">
    <location>
        <begin position="313"/>
        <end position="335"/>
    </location>
</feature>
<feature type="zinc finger region" description="C2H2-type 5" evidence="1">
    <location>
        <begin position="341"/>
        <end position="363"/>
    </location>
</feature>
<feature type="zinc finger region" description="C2H2-type 6" evidence="1">
    <location>
        <begin position="369"/>
        <end position="391"/>
    </location>
</feature>
<feature type="zinc finger region" description="C2H2-type 7" evidence="1">
    <location>
        <begin position="397"/>
        <end position="419"/>
    </location>
</feature>
<feature type="zinc finger region" description="C2H2-type 8" evidence="1">
    <location>
        <begin position="425"/>
        <end position="447"/>
    </location>
</feature>
<feature type="zinc finger region" description="C2H2-type 9" evidence="1">
    <location>
        <begin position="453"/>
        <end position="475"/>
    </location>
</feature>
<feature type="zinc finger region" description="C2H2-type 10" evidence="1">
    <location>
        <begin position="481"/>
        <end position="503"/>
    </location>
</feature>
<feature type="zinc finger region" description="C2H2-type 11" evidence="1">
    <location>
        <begin position="509"/>
        <end position="531"/>
    </location>
</feature>
<feature type="zinc finger region" description="C2H2-type 12" evidence="1">
    <location>
        <begin position="537"/>
        <end position="559"/>
    </location>
</feature>
<feature type="zinc finger region" description="C2H2-type 13" evidence="1">
    <location>
        <begin position="565"/>
        <end position="587"/>
    </location>
</feature>
<feature type="zinc finger region" description="C2H2-type 14" evidence="1">
    <location>
        <begin position="593"/>
        <end position="615"/>
    </location>
</feature>
<feature type="zinc finger region" description="C2H2-type 15" evidence="1">
    <location>
        <begin position="621"/>
        <end position="643"/>
    </location>
</feature>
<feature type="sequence variant" id="VAR_033165" description="In dbSNP:rs12459008." evidence="3">
    <original>I</original>
    <variation>N</variation>
    <location>
        <position position="80"/>
    </location>
</feature>
<feature type="sequence variant" id="VAR_033166" description="In dbSNP:rs11084210." evidence="3">
    <original>S</original>
    <variation>L</variation>
    <location>
        <position position="162"/>
    </location>
</feature>
<feature type="sequence conflict" description="In Ref. 4; AAI05741." evidence="4" ref="4">
    <original>I</original>
    <variation>IS</variation>
    <location>
        <position position="184"/>
    </location>
</feature>
<dbReference type="EMBL" id="AK291990">
    <property type="protein sequence ID" value="BAF84679.1"/>
    <property type="molecule type" value="mRNA"/>
</dbReference>
<dbReference type="EMBL" id="AC010487">
    <property type="status" value="NOT_ANNOTATED_CDS"/>
    <property type="molecule type" value="Genomic_DNA"/>
</dbReference>
<dbReference type="EMBL" id="AC010328">
    <property type="status" value="NOT_ANNOTATED_CDS"/>
    <property type="molecule type" value="Genomic_DNA"/>
</dbReference>
<dbReference type="EMBL" id="CH471135">
    <property type="protein sequence ID" value="EAW72106.1"/>
    <property type="molecule type" value="Genomic_DNA"/>
</dbReference>
<dbReference type="EMBL" id="BC105739">
    <property type="protein sequence ID" value="AAI05740.1"/>
    <property type="molecule type" value="mRNA"/>
</dbReference>
<dbReference type="EMBL" id="BC105740">
    <property type="protein sequence ID" value="AAI05741.1"/>
    <property type="molecule type" value="mRNA"/>
</dbReference>
<dbReference type="EMBL" id="BC105930">
    <property type="protein sequence ID" value="AAI05931.1"/>
    <property type="molecule type" value="mRNA"/>
</dbReference>
<dbReference type="EMBL" id="AL713804">
    <property type="protein sequence ID" value="CAH56373.1"/>
    <property type="molecule type" value="mRNA"/>
</dbReference>
<dbReference type="CCDS" id="CCDS33096.1"/>
<dbReference type="RefSeq" id="NP_001026835.1">
    <property type="nucleotide sequence ID" value="NM_001031665.4"/>
</dbReference>
<dbReference type="RefSeq" id="NP_001189385.1">
    <property type="nucleotide sequence ID" value="NM_001202456.3"/>
</dbReference>
<dbReference type="RefSeq" id="NP_001189386.1">
    <property type="nucleotide sequence ID" value="NM_001202457.3"/>
</dbReference>
<dbReference type="SMR" id="Q0VGE8"/>
<dbReference type="BioGRID" id="125933">
    <property type="interactions" value="50"/>
</dbReference>
<dbReference type="FunCoup" id="Q0VGE8">
    <property type="interactions" value="15"/>
</dbReference>
<dbReference type="IntAct" id="Q0VGE8">
    <property type="interactions" value="15"/>
</dbReference>
<dbReference type="STRING" id="9606.ENSP00000350295"/>
<dbReference type="iPTMnet" id="Q0VGE8"/>
<dbReference type="PhosphoSitePlus" id="Q0VGE8"/>
<dbReference type="BioMuta" id="ZNF816"/>
<dbReference type="DMDM" id="290457609"/>
<dbReference type="jPOST" id="Q0VGE8"/>
<dbReference type="MassIVE" id="Q0VGE8"/>
<dbReference type="PaxDb" id="9606-ENSP00000350295"/>
<dbReference type="PeptideAtlas" id="Q0VGE8"/>
<dbReference type="ProteomicsDB" id="58844"/>
<dbReference type="Antibodypedia" id="46251">
    <property type="antibodies" value="46 antibodies from 12 providers"/>
</dbReference>
<dbReference type="DNASU" id="125893"/>
<dbReference type="Ensembl" id="ENST00000357666.8">
    <property type="protein sequence ID" value="ENSP00000350295.4"/>
    <property type="gene ID" value="ENSG00000180257.14"/>
</dbReference>
<dbReference type="Ensembl" id="ENST00000444460.7">
    <property type="protein sequence ID" value="ENSP00000403266.2"/>
    <property type="gene ID" value="ENSG00000180257.14"/>
</dbReference>
<dbReference type="GeneID" id="125893"/>
<dbReference type="KEGG" id="hsa:125893"/>
<dbReference type="MANE-Select" id="ENST00000444460.7">
    <property type="protein sequence ID" value="ENSP00000403266.2"/>
    <property type="RefSeq nucleotide sequence ID" value="NM_001202457.3"/>
    <property type="RefSeq protein sequence ID" value="NP_001189386.1"/>
</dbReference>
<dbReference type="UCSC" id="uc002qal.3">
    <property type="organism name" value="human"/>
</dbReference>
<dbReference type="AGR" id="HGNC:26995"/>
<dbReference type="CTD" id="125893"/>
<dbReference type="DisGeNET" id="125893"/>
<dbReference type="GeneCards" id="ZNF816"/>
<dbReference type="HGNC" id="HGNC:26995">
    <property type="gene designation" value="ZNF816"/>
</dbReference>
<dbReference type="HPA" id="ENSG00000180257">
    <property type="expression patterns" value="Low tissue specificity"/>
</dbReference>
<dbReference type="neXtProt" id="NX_Q0VGE8"/>
<dbReference type="OpenTargets" id="ENSG00000180257"/>
<dbReference type="PharmGKB" id="PA165394953"/>
<dbReference type="VEuPathDB" id="HostDB:ENSG00000180257"/>
<dbReference type="eggNOG" id="KOG1721">
    <property type="taxonomic scope" value="Eukaryota"/>
</dbReference>
<dbReference type="GeneTree" id="ENSGT00940000154397"/>
<dbReference type="HOGENOM" id="CLU_002678_44_5_1"/>
<dbReference type="InParanoid" id="Q0VGE8"/>
<dbReference type="OMA" id="TFGRHSA"/>
<dbReference type="OrthoDB" id="9478211at2759"/>
<dbReference type="PAN-GO" id="Q0VGE8">
    <property type="GO annotations" value="4 GO annotations based on evolutionary models"/>
</dbReference>
<dbReference type="PhylomeDB" id="Q0VGE8"/>
<dbReference type="TreeFam" id="TF341892"/>
<dbReference type="PathwayCommons" id="Q0VGE8"/>
<dbReference type="Reactome" id="R-HSA-9843940">
    <property type="pathway name" value="Regulation of endogenous retroelements by KRAB-ZFP proteins"/>
</dbReference>
<dbReference type="SignaLink" id="Q0VGE8"/>
<dbReference type="BioGRID-ORCS" id="125893">
    <property type="hits" value="11 hits in 1122 CRISPR screens"/>
</dbReference>
<dbReference type="GenomeRNAi" id="125893"/>
<dbReference type="Pharos" id="Q0VGE8">
    <property type="development level" value="Tdark"/>
</dbReference>
<dbReference type="PRO" id="PR:Q0VGE8"/>
<dbReference type="Proteomes" id="UP000005640">
    <property type="component" value="Chromosome 19"/>
</dbReference>
<dbReference type="RNAct" id="Q0VGE8">
    <property type="molecule type" value="protein"/>
</dbReference>
<dbReference type="Bgee" id="ENSG00000180257">
    <property type="expression patterns" value="Expressed in buccal mucosa cell and 104 other cell types or tissues"/>
</dbReference>
<dbReference type="ExpressionAtlas" id="Q0VGE8">
    <property type="expression patterns" value="baseline and differential"/>
</dbReference>
<dbReference type="GO" id="GO:0005634">
    <property type="term" value="C:nucleus"/>
    <property type="evidence" value="ECO:0000318"/>
    <property type="project" value="GO_Central"/>
</dbReference>
<dbReference type="GO" id="GO:0000981">
    <property type="term" value="F:DNA-binding transcription factor activity, RNA polymerase II-specific"/>
    <property type="evidence" value="ECO:0000318"/>
    <property type="project" value="GO_Central"/>
</dbReference>
<dbReference type="GO" id="GO:0000978">
    <property type="term" value="F:RNA polymerase II cis-regulatory region sequence-specific DNA binding"/>
    <property type="evidence" value="ECO:0000318"/>
    <property type="project" value="GO_Central"/>
</dbReference>
<dbReference type="GO" id="GO:0008270">
    <property type="term" value="F:zinc ion binding"/>
    <property type="evidence" value="ECO:0007669"/>
    <property type="project" value="UniProtKB-KW"/>
</dbReference>
<dbReference type="GO" id="GO:0006357">
    <property type="term" value="P:regulation of transcription by RNA polymerase II"/>
    <property type="evidence" value="ECO:0000318"/>
    <property type="project" value="GO_Central"/>
</dbReference>
<dbReference type="CDD" id="cd07765">
    <property type="entry name" value="KRAB_A-box"/>
    <property type="match status" value="1"/>
</dbReference>
<dbReference type="FunFam" id="3.30.160.60:FF:004137">
    <property type="match status" value="2"/>
</dbReference>
<dbReference type="FunFam" id="3.30.160.60:FF:003288">
    <property type="entry name" value="Uncharacterized protein"/>
    <property type="match status" value="1"/>
</dbReference>
<dbReference type="FunFam" id="3.30.160.60:FF:000295">
    <property type="entry name" value="zinc finger protein 19"/>
    <property type="match status" value="1"/>
</dbReference>
<dbReference type="FunFam" id="3.30.160.60:FF:001158">
    <property type="entry name" value="zinc finger protein 22"/>
    <property type="match status" value="1"/>
</dbReference>
<dbReference type="FunFam" id="3.30.160.60:FF:000992">
    <property type="entry name" value="Zinc finger protein 320"/>
    <property type="match status" value="1"/>
</dbReference>
<dbReference type="FunFam" id="3.30.160.60:FF:002402">
    <property type="entry name" value="Zinc finger protein 347"/>
    <property type="match status" value="2"/>
</dbReference>
<dbReference type="FunFam" id="3.30.160.60:FF:002090">
    <property type="entry name" value="Zinc finger protein 473"/>
    <property type="match status" value="1"/>
</dbReference>
<dbReference type="FunFam" id="3.30.160.60:FF:002254">
    <property type="entry name" value="Zinc finger protein 540"/>
    <property type="match status" value="1"/>
</dbReference>
<dbReference type="FunFam" id="3.30.160.60:FF:000281">
    <property type="entry name" value="Zinc finger protein 558 isoform X1"/>
    <property type="match status" value="1"/>
</dbReference>
<dbReference type="FunFam" id="3.30.160.60:FF:000188">
    <property type="entry name" value="Zinc finger protein 787"/>
    <property type="match status" value="2"/>
</dbReference>
<dbReference type="FunFam" id="3.30.160.60:FF:002292">
    <property type="entry name" value="Zinc finger protein 816"/>
    <property type="match status" value="1"/>
</dbReference>
<dbReference type="FunFam" id="3.30.160.60:FF:000416">
    <property type="entry name" value="zinc finger protein 879 isoform X1"/>
    <property type="match status" value="2"/>
</dbReference>
<dbReference type="FunFam" id="3.30.160.60:FF:001630">
    <property type="entry name" value="Zinc finger protein 888"/>
    <property type="match status" value="1"/>
</dbReference>
<dbReference type="Gene3D" id="6.10.140.140">
    <property type="match status" value="1"/>
</dbReference>
<dbReference type="Gene3D" id="3.30.160.60">
    <property type="entry name" value="Classic Zinc Finger"/>
    <property type="match status" value="15"/>
</dbReference>
<dbReference type="InterPro" id="IPR001909">
    <property type="entry name" value="KRAB"/>
</dbReference>
<dbReference type="InterPro" id="IPR036051">
    <property type="entry name" value="KRAB_dom_sf"/>
</dbReference>
<dbReference type="InterPro" id="IPR036236">
    <property type="entry name" value="Znf_C2H2_sf"/>
</dbReference>
<dbReference type="InterPro" id="IPR013087">
    <property type="entry name" value="Znf_C2H2_type"/>
</dbReference>
<dbReference type="PANTHER" id="PTHR24408">
    <property type="entry name" value="ZINC FINGER PROTEIN"/>
    <property type="match status" value="1"/>
</dbReference>
<dbReference type="PANTHER" id="PTHR24408:SF34">
    <property type="entry name" value="ZINC FINGER PROTEIN 672-RELATED"/>
    <property type="match status" value="1"/>
</dbReference>
<dbReference type="Pfam" id="PF01352">
    <property type="entry name" value="KRAB"/>
    <property type="match status" value="1"/>
</dbReference>
<dbReference type="Pfam" id="PF00096">
    <property type="entry name" value="zf-C2H2"/>
    <property type="match status" value="14"/>
</dbReference>
<dbReference type="SMART" id="SM00349">
    <property type="entry name" value="KRAB"/>
    <property type="match status" value="1"/>
</dbReference>
<dbReference type="SMART" id="SM00355">
    <property type="entry name" value="ZnF_C2H2"/>
    <property type="match status" value="15"/>
</dbReference>
<dbReference type="SUPFAM" id="SSF57667">
    <property type="entry name" value="beta-beta-alpha zinc fingers"/>
    <property type="match status" value="8"/>
</dbReference>
<dbReference type="SUPFAM" id="SSF109640">
    <property type="entry name" value="KRAB domain (Kruppel-associated box)"/>
    <property type="match status" value="1"/>
</dbReference>
<dbReference type="PROSITE" id="PS50805">
    <property type="entry name" value="KRAB"/>
    <property type="match status" value="1"/>
</dbReference>
<dbReference type="PROSITE" id="PS00028">
    <property type="entry name" value="ZINC_FINGER_C2H2_1"/>
    <property type="match status" value="15"/>
</dbReference>
<dbReference type="PROSITE" id="PS50157">
    <property type="entry name" value="ZINC_FINGER_C2H2_2"/>
    <property type="match status" value="15"/>
</dbReference>
<accession>Q0VGE8</accession>
<accession>A8K7H5</accession>
<accession>Q3KR39</accession>
<accession>Q659B3</accession>
<name>ZN816_HUMAN</name>
<keyword id="KW-0238">DNA-binding</keyword>
<keyword id="KW-0479">Metal-binding</keyword>
<keyword id="KW-0539">Nucleus</keyword>
<keyword id="KW-1267">Proteomics identification</keyword>
<keyword id="KW-1185">Reference proteome</keyword>
<keyword id="KW-0677">Repeat</keyword>
<keyword id="KW-0804">Transcription</keyword>
<keyword id="KW-0805">Transcription regulation</keyword>
<keyword id="KW-0862">Zinc</keyword>
<keyword id="KW-0863">Zinc-finger</keyword>
<organism>
    <name type="scientific">Homo sapiens</name>
    <name type="common">Human</name>
    <dbReference type="NCBI Taxonomy" id="9606"/>
    <lineage>
        <taxon>Eukaryota</taxon>
        <taxon>Metazoa</taxon>
        <taxon>Chordata</taxon>
        <taxon>Craniata</taxon>
        <taxon>Vertebrata</taxon>
        <taxon>Euteleostomi</taxon>
        <taxon>Mammalia</taxon>
        <taxon>Eutheria</taxon>
        <taxon>Euarchontoglires</taxon>
        <taxon>Primates</taxon>
        <taxon>Haplorrhini</taxon>
        <taxon>Catarrhini</taxon>
        <taxon>Hominidae</taxon>
        <taxon>Homo</taxon>
    </lineage>
</organism>
<proteinExistence type="evidence at protein level"/>
<protein>
    <recommendedName>
        <fullName>Zinc finger protein 816</fullName>
    </recommendedName>
</protein>
<gene>
    <name type="primary">ZNF816</name>
    <name type="synonym">ZNF816A</name>
</gene>
<sequence>MLREEATKKSKEKEPGMALPQGRLTFRDVAIEFSLEEWKCLNPAQRALYRAVMLENYRNLEFVDSSLKSMMEFSSTRHSITGEVIHTGTLQRHKSHHIGDFCFPEMKKDIHHFEFQWQEVERNGHEAPMTKIKKLTGSTDRSDHRHAGNKPIKDQLGLSFHSHLPELHMFQTKGKISNQLDKSIGASSASESQRISCRLKTHISNKYGKNFLHSSFTQIQEICMREKPCQSNECGKAFNYSSLLRRHHITHSREREYKCDVCGKIFNQKQYIVYHHRCHTGEKTYKCNECGKTFTQMSSLVCHRRLHTGEKPYKCNECGKTFSEKSSLRCHRRLHTGEKPYKCNECGKTFGRNSALVIHKAIHTGEKPYKCNECGKTFSQKSSLQCHHILHTGEKPYKCEECDNVYIRRSHLERHRKIHTGEGSYKCKVCDKVFRSDSYLAEHQRVHTGEKPYKCNKCGRSFSRKSSLQYHHTLHTGEKPYTCNECGKVFSRRENLARHHRLHAGEKPYKCEECDKVFSRRSHLERHRRIHTGEKPYKCKVCDKAFRSDSCLANHTRVHTGEKPYKCNKCAKVFNQKGILAQHQRVHTGEKPYKCNECGKVFNQKASLAKHQRVHTAEKPYKCNECGKAFTGQSTLIHHQAIHGCRETLQM</sequence>
<evidence type="ECO:0000255" key="1">
    <source>
        <dbReference type="PROSITE-ProRule" id="PRU00042"/>
    </source>
</evidence>
<evidence type="ECO:0000255" key="2">
    <source>
        <dbReference type="PROSITE-ProRule" id="PRU00119"/>
    </source>
</evidence>
<evidence type="ECO:0000269" key="3">
    <source>
    </source>
</evidence>
<evidence type="ECO:0000305" key="4"/>